<gene>
    <name evidence="1" type="primary">yidC</name>
    <name type="ordered locus">Rmet_3613</name>
</gene>
<feature type="chain" id="PRO_1000070150" description="Membrane protein insertase YidC">
    <location>
        <begin position="1"/>
        <end position="555"/>
    </location>
</feature>
<feature type="transmembrane region" description="Helical" evidence="1">
    <location>
        <begin position="7"/>
        <end position="24"/>
    </location>
</feature>
<feature type="transmembrane region" description="Helical" evidence="1">
    <location>
        <begin position="334"/>
        <end position="354"/>
    </location>
</feature>
<feature type="transmembrane region" description="Helical" evidence="1">
    <location>
        <begin position="360"/>
        <end position="380"/>
    </location>
</feature>
<feature type="transmembrane region" description="Helical" evidence="1">
    <location>
        <begin position="430"/>
        <end position="450"/>
    </location>
</feature>
<feature type="transmembrane region" description="Helical" evidence="1">
    <location>
        <begin position="468"/>
        <end position="488"/>
    </location>
</feature>
<feature type="transmembrane region" description="Helical" evidence="1">
    <location>
        <begin position="503"/>
        <end position="523"/>
    </location>
</feature>
<feature type="region of interest" description="Disordered" evidence="2">
    <location>
        <begin position="40"/>
        <end position="81"/>
    </location>
</feature>
<feature type="compositionally biased region" description="Low complexity" evidence="2">
    <location>
        <begin position="40"/>
        <end position="54"/>
    </location>
</feature>
<feature type="compositionally biased region" description="Low complexity" evidence="2">
    <location>
        <begin position="64"/>
        <end position="81"/>
    </location>
</feature>
<proteinExistence type="inferred from homology"/>
<name>YIDC_CUPMC</name>
<keyword id="KW-0997">Cell inner membrane</keyword>
<keyword id="KW-1003">Cell membrane</keyword>
<keyword id="KW-0143">Chaperone</keyword>
<keyword id="KW-0472">Membrane</keyword>
<keyword id="KW-0653">Protein transport</keyword>
<keyword id="KW-1185">Reference proteome</keyword>
<keyword id="KW-0812">Transmembrane</keyword>
<keyword id="KW-1133">Transmembrane helix</keyword>
<keyword id="KW-0813">Transport</keyword>
<comment type="function">
    <text evidence="1">Required for the insertion and/or proper folding and/or complex formation of integral membrane proteins into the membrane. Involved in integration of membrane proteins that insert both dependently and independently of the Sec translocase complex, as well as at least some lipoproteins. Aids folding of multispanning membrane proteins.</text>
</comment>
<comment type="subunit">
    <text evidence="1">Interacts with the Sec translocase complex via SecD. Specifically interacts with transmembrane segments of nascent integral membrane proteins during membrane integration.</text>
</comment>
<comment type="subcellular location">
    <subcellularLocation>
        <location evidence="1">Cell inner membrane</location>
        <topology evidence="1">Multi-pass membrane protein</topology>
    </subcellularLocation>
</comment>
<comment type="similarity">
    <text evidence="1">Belongs to the OXA1/ALB3/YidC family. Type 1 subfamily.</text>
</comment>
<organism>
    <name type="scientific">Cupriavidus metallidurans (strain ATCC 43123 / DSM 2839 / NBRC 102507 / CH34)</name>
    <name type="common">Ralstonia metallidurans</name>
    <dbReference type="NCBI Taxonomy" id="266264"/>
    <lineage>
        <taxon>Bacteria</taxon>
        <taxon>Pseudomonadati</taxon>
        <taxon>Pseudomonadota</taxon>
        <taxon>Betaproteobacteria</taxon>
        <taxon>Burkholderiales</taxon>
        <taxon>Burkholderiaceae</taxon>
        <taxon>Cupriavidus</taxon>
    </lineage>
</organism>
<evidence type="ECO:0000255" key="1">
    <source>
        <dbReference type="HAMAP-Rule" id="MF_01810"/>
    </source>
</evidence>
<evidence type="ECO:0000256" key="2">
    <source>
        <dbReference type="SAM" id="MobiDB-lite"/>
    </source>
</evidence>
<dbReference type="EMBL" id="CP000352">
    <property type="protein sequence ID" value="ABF10485.1"/>
    <property type="molecule type" value="Genomic_DNA"/>
</dbReference>
<dbReference type="RefSeq" id="WP_011518027.1">
    <property type="nucleotide sequence ID" value="NC_007973.1"/>
</dbReference>
<dbReference type="SMR" id="Q1LH91"/>
<dbReference type="STRING" id="266264.Rmet_3613"/>
<dbReference type="KEGG" id="rme:Rmet_3613"/>
<dbReference type="eggNOG" id="COG0706">
    <property type="taxonomic scope" value="Bacteria"/>
</dbReference>
<dbReference type="HOGENOM" id="CLU_016535_3_0_4"/>
<dbReference type="Proteomes" id="UP000002429">
    <property type="component" value="Chromosome"/>
</dbReference>
<dbReference type="GO" id="GO:0005886">
    <property type="term" value="C:plasma membrane"/>
    <property type="evidence" value="ECO:0007669"/>
    <property type="project" value="UniProtKB-SubCell"/>
</dbReference>
<dbReference type="GO" id="GO:0032977">
    <property type="term" value="F:membrane insertase activity"/>
    <property type="evidence" value="ECO:0007669"/>
    <property type="project" value="InterPro"/>
</dbReference>
<dbReference type="GO" id="GO:0051205">
    <property type="term" value="P:protein insertion into membrane"/>
    <property type="evidence" value="ECO:0007669"/>
    <property type="project" value="TreeGrafter"/>
</dbReference>
<dbReference type="GO" id="GO:0015031">
    <property type="term" value="P:protein transport"/>
    <property type="evidence" value="ECO:0007669"/>
    <property type="project" value="UniProtKB-KW"/>
</dbReference>
<dbReference type="CDD" id="cd20070">
    <property type="entry name" value="5TM_YidC_Alb3"/>
    <property type="match status" value="1"/>
</dbReference>
<dbReference type="CDD" id="cd19961">
    <property type="entry name" value="EcYidC-like_peri"/>
    <property type="match status" value="1"/>
</dbReference>
<dbReference type="Gene3D" id="2.70.98.90">
    <property type="match status" value="1"/>
</dbReference>
<dbReference type="HAMAP" id="MF_01810">
    <property type="entry name" value="YidC_type1"/>
    <property type="match status" value="1"/>
</dbReference>
<dbReference type="InterPro" id="IPR019998">
    <property type="entry name" value="Membr_insert_YidC"/>
</dbReference>
<dbReference type="InterPro" id="IPR028053">
    <property type="entry name" value="Membr_insert_YidC_N"/>
</dbReference>
<dbReference type="InterPro" id="IPR001708">
    <property type="entry name" value="YidC/ALB3/OXA1/COX18"/>
</dbReference>
<dbReference type="InterPro" id="IPR028055">
    <property type="entry name" value="YidC/Oxa/ALB_C"/>
</dbReference>
<dbReference type="InterPro" id="IPR047196">
    <property type="entry name" value="YidC_ALB_C"/>
</dbReference>
<dbReference type="InterPro" id="IPR038221">
    <property type="entry name" value="YidC_periplasmic_sf"/>
</dbReference>
<dbReference type="NCBIfam" id="NF002352">
    <property type="entry name" value="PRK01318.1-3"/>
    <property type="match status" value="1"/>
</dbReference>
<dbReference type="NCBIfam" id="NF002353">
    <property type="entry name" value="PRK01318.1-4"/>
    <property type="match status" value="1"/>
</dbReference>
<dbReference type="NCBIfam" id="TIGR03593">
    <property type="entry name" value="yidC_nterm"/>
    <property type="match status" value="1"/>
</dbReference>
<dbReference type="NCBIfam" id="TIGR03592">
    <property type="entry name" value="yidC_oxa1_cterm"/>
    <property type="match status" value="1"/>
</dbReference>
<dbReference type="PANTHER" id="PTHR12428:SF65">
    <property type="entry name" value="CYTOCHROME C OXIDASE ASSEMBLY PROTEIN COX18, MITOCHONDRIAL"/>
    <property type="match status" value="1"/>
</dbReference>
<dbReference type="PANTHER" id="PTHR12428">
    <property type="entry name" value="OXA1"/>
    <property type="match status" value="1"/>
</dbReference>
<dbReference type="Pfam" id="PF02096">
    <property type="entry name" value="60KD_IMP"/>
    <property type="match status" value="1"/>
</dbReference>
<dbReference type="Pfam" id="PF14849">
    <property type="entry name" value="YidC_periplas"/>
    <property type="match status" value="1"/>
</dbReference>
<dbReference type="PRINTS" id="PR00701">
    <property type="entry name" value="60KDINNERMP"/>
</dbReference>
<dbReference type="PRINTS" id="PR01900">
    <property type="entry name" value="YIDCPROTEIN"/>
</dbReference>
<reference key="1">
    <citation type="journal article" date="2010" name="PLoS ONE">
        <title>The complete genome sequence of Cupriavidus metallidurans strain CH34, a master survivalist in harsh and anthropogenic environments.</title>
        <authorList>
            <person name="Janssen P.J."/>
            <person name="Van Houdt R."/>
            <person name="Moors H."/>
            <person name="Monsieurs P."/>
            <person name="Morin N."/>
            <person name="Michaux A."/>
            <person name="Benotmane M.A."/>
            <person name="Leys N."/>
            <person name="Vallaeys T."/>
            <person name="Lapidus A."/>
            <person name="Monchy S."/>
            <person name="Medigue C."/>
            <person name="Taghavi S."/>
            <person name="McCorkle S."/>
            <person name="Dunn J."/>
            <person name="van der Lelie D."/>
            <person name="Mergeay M."/>
        </authorList>
    </citation>
    <scope>NUCLEOTIDE SEQUENCE [LARGE SCALE GENOMIC DNA]</scope>
    <source>
        <strain>ATCC 43123 / DSM 2839 / NBRC 102507 / CH34</strain>
    </source>
</reference>
<accession>Q1LH91</accession>
<sequence>MDIKRTILWVIFSMSLVLLYDNWQRANGHASMFFPSANTQQAAPAGAGGATPQADVPKANATNAAPGTVPAAPQAAAQPVGEKVTVTTDEVRAEIDTAGGILSRLELLNEHEKDGAPVVLLERDVNRTYLARSGLIGGDLPNHTTVFTVAPGARTLAPGQDKLDVVLTAEKNGVKFVKTYTFHKGSYVVDTRFDVTNTGTAAVSPTLYLELARDGSKVEKSQFYSTFTGPAIYTNADKYHKLTFEDIAKGKATVPAATDNGWVAMVQHYFASAWIPQTGKQHSFYAEQIDPNLYRVGIQQPLGQLAPGATVSTDARLFAGPQEERMLEQITPGLELVKDYGWLTILAKPLFWLLEKLHGFLGNWGWSIIGLTVLIKLVFFPLSAASYKSMGKMKDLQPRMTAIRERHKGDPQKMNQEMMALYRTEKVNPLGGCLPIVIQIPVFIALYWVLLSSVEMRGAPWLGWIHDLSVPDPFYILPIVMAVSMFVQTRLNPTPPDPVQAKVMMIMPLVFSFMFFFFPAGLVLYWVVNNILSIAQQWQINRMLGKGKTAAVAKS</sequence>
<protein>
    <recommendedName>
        <fullName evidence="1">Membrane protein insertase YidC</fullName>
    </recommendedName>
    <alternativeName>
        <fullName evidence="1">Foldase YidC</fullName>
    </alternativeName>
    <alternativeName>
        <fullName evidence="1">Membrane integrase YidC</fullName>
    </alternativeName>
    <alternativeName>
        <fullName evidence="1">Membrane protein YidC</fullName>
    </alternativeName>
</protein>